<accession>Q608X7</accession>
<organism>
    <name type="scientific">Methylococcus capsulatus (strain ATCC 33009 / NCIMB 11132 / Bath)</name>
    <dbReference type="NCBI Taxonomy" id="243233"/>
    <lineage>
        <taxon>Bacteria</taxon>
        <taxon>Pseudomonadati</taxon>
        <taxon>Pseudomonadota</taxon>
        <taxon>Gammaproteobacteria</taxon>
        <taxon>Methylococcales</taxon>
        <taxon>Methylococcaceae</taxon>
        <taxon>Methylococcus</taxon>
    </lineage>
</organism>
<comment type="function">
    <text evidence="1">NDH-1 shuttles electrons from NADH, via FMN and iron-sulfur (Fe-S) centers, to quinones in the respiratory chain. The immediate electron acceptor for the enzyme in this species is believed to be ubiquinone. Couples the redox reaction to proton translocation (for every two electrons transferred, four hydrogen ions are translocated across the cytoplasmic membrane), and thus conserves the redox energy in a proton gradient.</text>
</comment>
<comment type="catalytic activity">
    <reaction evidence="1">
        <text>a quinone + NADH + 5 H(+)(in) = a quinol + NAD(+) + 4 H(+)(out)</text>
        <dbReference type="Rhea" id="RHEA:57888"/>
        <dbReference type="ChEBI" id="CHEBI:15378"/>
        <dbReference type="ChEBI" id="CHEBI:24646"/>
        <dbReference type="ChEBI" id="CHEBI:57540"/>
        <dbReference type="ChEBI" id="CHEBI:57945"/>
        <dbReference type="ChEBI" id="CHEBI:132124"/>
    </reaction>
</comment>
<comment type="subunit">
    <text evidence="1">NDH-1 is composed of 14 different subunits. Subunits NuoA, H, J, K, L, M, N constitute the membrane sector of the complex.</text>
</comment>
<comment type="subcellular location">
    <subcellularLocation>
        <location evidence="1">Cell inner membrane</location>
        <topology evidence="1">Multi-pass membrane protein</topology>
    </subcellularLocation>
</comment>
<comment type="similarity">
    <text evidence="1">Belongs to the complex I subunit 3 family.</text>
</comment>
<reference key="1">
    <citation type="journal article" date="2004" name="PLoS Biol.">
        <title>Genomic insights into methanotrophy: the complete genome sequence of Methylococcus capsulatus (Bath).</title>
        <authorList>
            <person name="Ward N.L."/>
            <person name="Larsen O."/>
            <person name="Sakwa J."/>
            <person name="Bruseth L."/>
            <person name="Khouri H.M."/>
            <person name="Durkin A.S."/>
            <person name="Dimitrov G."/>
            <person name="Jiang L."/>
            <person name="Scanlan D."/>
            <person name="Kang K.H."/>
            <person name="Lewis M.R."/>
            <person name="Nelson K.E."/>
            <person name="Methe B.A."/>
            <person name="Wu M."/>
            <person name="Heidelberg J.F."/>
            <person name="Paulsen I.T."/>
            <person name="Fouts D.E."/>
            <person name="Ravel J."/>
            <person name="Tettelin H."/>
            <person name="Ren Q."/>
            <person name="Read T.D."/>
            <person name="DeBoy R.T."/>
            <person name="Seshadri R."/>
            <person name="Salzberg S.L."/>
            <person name="Jensen H.B."/>
            <person name="Birkeland N.K."/>
            <person name="Nelson W.C."/>
            <person name="Dodson R.J."/>
            <person name="Grindhaug S.H."/>
            <person name="Holt I.E."/>
            <person name="Eidhammer I."/>
            <person name="Jonasen I."/>
            <person name="Vanaken S."/>
            <person name="Utterback T.R."/>
            <person name="Feldblyum T.V."/>
            <person name="Fraser C.M."/>
            <person name="Lillehaug J.R."/>
            <person name="Eisen J.A."/>
        </authorList>
    </citation>
    <scope>NUCLEOTIDE SEQUENCE [LARGE SCALE GENOMIC DNA]</scope>
    <source>
        <strain>ATCC 33009 / NCIMB 11132 / Bath</strain>
    </source>
</reference>
<evidence type="ECO:0000255" key="1">
    <source>
        <dbReference type="HAMAP-Rule" id="MF_01394"/>
    </source>
</evidence>
<proteinExistence type="inferred from homology"/>
<keyword id="KW-0997">Cell inner membrane</keyword>
<keyword id="KW-1003">Cell membrane</keyword>
<keyword id="KW-0472">Membrane</keyword>
<keyword id="KW-0520">NAD</keyword>
<keyword id="KW-0874">Quinone</keyword>
<keyword id="KW-1185">Reference proteome</keyword>
<keyword id="KW-1278">Translocase</keyword>
<keyword id="KW-0812">Transmembrane</keyword>
<keyword id="KW-1133">Transmembrane helix</keyword>
<keyword id="KW-0813">Transport</keyword>
<keyword id="KW-0830">Ubiquinone</keyword>
<feature type="chain" id="PRO_0000362702" description="NADH-quinone oxidoreductase subunit A">
    <location>
        <begin position="1"/>
        <end position="139"/>
    </location>
</feature>
<feature type="transmembrane region" description="Helical" evidence="1">
    <location>
        <begin position="11"/>
        <end position="31"/>
    </location>
</feature>
<feature type="transmembrane region" description="Helical" evidence="1">
    <location>
        <begin position="70"/>
        <end position="90"/>
    </location>
</feature>
<feature type="transmembrane region" description="Helical" evidence="1">
    <location>
        <begin position="97"/>
        <end position="117"/>
    </location>
</feature>
<gene>
    <name evidence="1" type="primary">nuoA</name>
    <name type="ordered locus">MCA1359</name>
</gene>
<name>NUOA_METCA</name>
<sequence length="139" mass="15862">MSSAGVPHTDLWPLLLYFELVLVVVGTMLALPPFLGERRTRRTPATEQPYESGIVAVGSSQLRFSVRFYLIAIFFVIFDLEAVFIFAWAIAFRESGWPGYIEILIFIGVLVATLVYLWRIGALDWRTPRQRSIEATIHQ</sequence>
<protein>
    <recommendedName>
        <fullName evidence="1">NADH-quinone oxidoreductase subunit A</fullName>
        <ecNumber evidence="1">7.1.1.-</ecNumber>
    </recommendedName>
    <alternativeName>
        <fullName evidence="1">NADH dehydrogenase I subunit A</fullName>
    </alternativeName>
    <alternativeName>
        <fullName evidence="1">NDH-1 subunit A</fullName>
    </alternativeName>
    <alternativeName>
        <fullName evidence="1">NUO1</fullName>
    </alternativeName>
</protein>
<dbReference type="EC" id="7.1.1.-" evidence="1"/>
<dbReference type="EMBL" id="AE017282">
    <property type="protein sequence ID" value="AAU92575.1"/>
    <property type="molecule type" value="Genomic_DNA"/>
</dbReference>
<dbReference type="RefSeq" id="WP_010960639.1">
    <property type="nucleotide sequence ID" value="NC_002977.6"/>
</dbReference>
<dbReference type="SMR" id="Q608X7"/>
<dbReference type="STRING" id="243233.MCA1359"/>
<dbReference type="GeneID" id="88223637"/>
<dbReference type="KEGG" id="mca:MCA1359"/>
<dbReference type="eggNOG" id="COG0838">
    <property type="taxonomic scope" value="Bacteria"/>
</dbReference>
<dbReference type="HOGENOM" id="CLU_119549_2_0_6"/>
<dbReference type="Proteomes" id="UP000006821">
    <property type="component" value="Chromosome"/>
</dbReference>
<dbReference type="GO" id="GO:0030964">
    <property type="term" value="C:NADH dehydrogenase complex"/>
    <property type="evidence" value="ECO:0007669"/>
    <property type="project" value="TreeGrafter"/>
</dbReference>
<dbReference type="GO" id="GO:0005886">
    <property type="term" value="C:plasma membrane"/>
    <property type="evidence" value="ECO:0007669"/>
    <property type="project" value="UniProtKB-SubCell"/>
</dbReference>
<dbReference type="GO" id="GO:0008137">
    <property type="term" value="F:NADH dehydrogenase (ubiquinone) activity"/>
    <property type="evidence" value="ECO:0007669"/>
    <property type="project" value="InterPro"/>
</dbReference>
<dbReference type="GO" id="GO:0050136">
    <property type="term" value="F:NADH:ubiquinone reductase (non-electrogenic) activity"/>
    <property type="evidence" value="ECO:0007669"/>
    <property type="project" value="UniProtKB-UniRule"/>
</dbReference>
<dbReference type="GO" id="GO:0048038">
    <property type="term" value="F:quinone binding"/>
    <property type="evidence" value="ECO:0007669"/>
    <property type="project" value="UniProtKB-KW"/>
</dbReference>
<dbReference type="Gene3D" id="1.20.58.1610">
    <property type="entry name" value="NADH:ubiquinone/plastoquinone oxidoreductase, chain 3"/>
    <property type="match status" value="1"/>
</dbReference>
<dbReference type="HAMAP" id="MF_01394">
    <property type="entry name" value="NDH1_NuoA"/>
    <property type="match status" value="1"/>
</dbReference>
<dbReference type="InterPro" id="IPR023043">
    <property type="entry name" value="NAD(P)H_OxRDtase_bac/plastid"/>
</dbReference>
<dbReference type="InterPro" id="IPR000440">
    <property type="entry name" value="NADH_UbQ/plastoQ_OxRdtase_su3"/>
</dbReference>
<dbReference type="InterPro" id="IPR038430">
    <property type="entry name" value="NDAH_ubi_oxred_su3_sf"/>
</dbReference>
<dbReference type="PANTHER" id="PTHR11058:SF21">
    <property type="entry name" value="NADH-QUINONE OXIDOREDUCTASE SUBUNIT A"/>
    <property type="match status" value="1"/>
</dbReference>
<dbReference type="PANTHER" id="PTHR11058">
    <property type="entry name" value="NADH-UBIQUINONE OXIDOREDUCTASE CHAIN 3"/>
    <property type="match status" value="1"/>
</dbReference>
<dbReference type="Pfam" id="PF00507">
    <property type="entry name" value="Oxidored_q4"/>
    <property type="match status" value="1"/>
</dbReference>